<dbReference type="EC" id="3.4.11.4" evidence="1"/>
<dbReference type="EMBL" id="AM933173">
    <property type="protein sequence ID" value="CAR37746.1"/>
    <property type="molecule type" value="Genomic_DNA"/>
</dbReference>
<dbReference type="RefSeq" id="WP_000359414.1">
    <property type="nucleotide sequence ID" value="NC_011274.1"/>
</dbReference>
<dbReference type="SMR" id="B5RB75"/>
<dbReference type="MEROPS" id="M20.003"/>
<dbReference type="KEGG" id="seg:SG1894"/>
<dbReference type="HOGENOM" id="CLU_053676_0_0_6"/>
<dbReference type="Proteomes" id="UP000008321">
    <property type="component" value="Chromosome"/>
</dbReference>
<dbReference type="GO" id="GO:0005829">
    <property type="term" value="C:cytosol"/>
    <property type="evidence" value="ECO:0007669"/>
    <property type="project" value="TreeGrafter"/>
</dbReference>
<dbReference type="GO" id="GO:0008237">
    <property type="term" value="F:metallopeptidase activity"/>
    <property type="evidence" value="ECO:0007669"/>
    <property type="project" value="UniProtKB-KW"/>
</dbReference>
<dbReference type="GO" id="GO:0045148">
    <property type="term" value="F:tripeptide aminopeptidase activity"/>
    <property type="evidence" value="ECO:0007669"/>
    <property type="project" value="UniProtKB-UniRule"/>
</dbReference>
<dbReference type="GO" id="GO:0008270">
    <property type="term" value="F:zinc ion binding"/>
    <property type="evidence" value="ECO:0007669"/>
    <property type="project" value="UniProtKB-UniRule"/>
</dbReference>
<dbReference type="GO" id="GO:0043171">
    <property type="term" value="P:peptide catabolic process"/>
    <property type="evidence" value="ECO:0007669"/>
    <property type="project" value="UniProtKB-UniRule"/>
</dbReference>
<dbReference type="GO" id="GO:0006508">
    <property type="term" value="P:proteolysis"/>
    <property type="evidence" value="ECO:0007669"/>
    <property type="project" value="UniProtKB-UniRule"/>
</dbReference>
<dbReference type="CDD" id="cd03892">
    <property type="entry name" value="M20_peptT"/>
    <property type="match status" value="1"/>
</dbReference>
<dbReference type="FunFam" id="3.30.70.360:FF:000002">
    <property type="entry name" value="Peptidase T"/>
    <property type="match status" value="1"/>
</dbReference>
<dbReference type="Gene3D" id="3.30.70.360">
    <property type="match status" value="1"/>
</dbReference>
<dbReference type="Gene3D" id="3.40.630.10">
    <property type="entry name" value="Zn peptidases"/>
    <property type="match status" value="1"/>
</dbReference>
<dbReference type="HAMAP" id="MF_00550">
    <property type="entry name" value="Aminopeptidase_M20"/>
    <property type="match status" value="1"/>
</dbReference>
<dbReference type="InterPro" id="IPR001261">
    <property type="entry name" value="ArgE/DapE_CS"/>
</dbReference>
<dbReference type="InterPro" id="IPR036264">
    <property type="entry name" value="Bact_exopeptidase_dim_dom"/>
</dbReference>
<dbReference type="InterPro" id="IPR002933">
    <property type="entry name" value="Peptidase_M20"/>
</dbReference>
<dbReference type="InterPro" id="IPR011650">
    <property type="entry name" value="Peptidase_M20_dimer"/>
</dbReference>
<dbReference type="InterPro" id="IPR010161">
    <property type="entry name" value="Peptidase_M20B"/>
</dbReference>
<dbReference type="NCBIfam" id="TIGR01882">
    <property type="entry name" value="peptidase-T"/>
    <property type="match status" value="1"/>
</dbReference>
<dbReference type="NCBIfam" id="NF003976">
    <property type="entry name" value="PRK05469.1"/>
    <property type="match status" value="1"/>
</dbReference>
<dbReference type="NCBIfam" id="NF009920">
    <property type="entry name" value="PRK13381.1"/>
    <property type="match status" value="1"/>
</dbReference>
<dbReference type="PANTHER" id="PTHR42994">
    <property type="entry name" value="PEPTIDASE T"/>
    <property type="match status" value="1"/>
</dbReference>
<dbReference type="PANTHER" id="PTHR42994:SF1">
    <property type="entry name" value="PEPTIDASE T"/>
    <property type="match status" value="1"/>
</dbReference>
<dbReference type="Pfam" id="PF07687">
    <property type="entry name" value="M20_dimer"/>
    <property type="match status" value="1"/>
</dbReference>
<dbReference type="Pfam" id="PF01546">
    <property type="entry name" value="Peptidase_M20"/>
    <property type="match status" value="1"/>
</dbReference>
<dbReference type="PIRSF" id="PIRSF037215">
    <property type="entry name" value="Peptidase_M20B"/>
    <property type="match status" value="1"/>
</dbReference>
<dbReference type="SUPFAM" id="SSF55031">
    <property type="entry name" value="Bacterial exopeptidase dimerisation domain"/>
    <property type="match status" value="1"/>
</dbReference>
<dbReference type="SUPFAM" id="SSF53187">
    <property type="entry name" value="Zn-dependent exopeptidases"/>
    <property type="match status" value="1"/>
</dbReference>
<dbReference type="PROSITE" id="PS00758">
    <property type="entry name" value="ARGE_DAPE_CPG2_1"/>
    <property type="match status" value="1"/>
</dbReference>
<dbReference type="PROSITE" id="PS00759">
    <property type="entry name" value="ARGE_DAPE_CPG2_2"/>
    <property type="match status" value="1"/>
</dbReference>
<keyword id="KW-0031">Aminopeptidase</keyword>
<keyword id="KW-0963">Cytoplasm</keyword>
<keyword id="KW-0378">Hydrolase</keyword>
<keyword id="KW-0479">Metal-binding</keyword>
<keyword id="KW-0482">Metalloprotease</keyword>
<keyword id="KW-0645">Protease</keyword>
<keyword id="KW-0862">Zinc</keyword>
<proteinExistence type="inferred from homology"/>
<sequence length="409" mass="44863">MDKLLERFLHYVSLDTQSKSGVRQVPSTEGQWKLLRLLKQQLEEMGLVNITLSEKGTLMATLPANVEGDIPAIGFISHVDTSPDFSGKNVNPQIVENYRGGDIALGIGDEVLSPVMFPVLHQLLGQTLITTDGKTLLGADDKAGVAEIMTALAVLKGNPIPHGEIKVAFTPDEEVGKGAKHFDVEAFGAQWAYTVDGGGVGELEFENFNAASVNIKIVGNNVHPGTAKGVMVNALSLAARIHAEVPADEAPETTEGYEGFYHLASMKGTVDRAEMHYIIRDFDRKQFEARKRKMMEIAKKVGKGLHPDCYIELVIEDSYYNMREKVVEHPHILDIAQQAMRDCHITPEMKPIRGGTDGAQLSFMGLPCPNLFTGGYNYHGKHEFVTLEGMEKAVQVIVRIAELTAKRGQ</sequence>
<protein>
    <recommendedName>
        <fullName evidence="1">Peptidase T</fullName>
        <ecNumber evidence="1">3.4.11.4</ecNumber>
    </recommendedName>
    <alternativeName>
        <fullName evidence="1">Aminotripeptidase</fullName>
        <shortName evidence="1">Tripeptidase</shortName>
    </alternativeName>
    <alternativeName>
        <fullName evidence="1">Tripeptide aminopeptidase</fullName>
    </alternativeName>
</protein>
<evidence type="ECO:0000255" key="1">
    <source>
        <dbReference type="HAMAP-Rule" id="MF_00550"/>
    </source>
</evidence>
<gene>
    <name evidence="1" type="primary">pepT</name>
    <name type="ordered locus">SG1894</name>
</gene>
<reference key="1">
    <citation type="journal article" date="2008" name="Genome Res.">
        <title>Comparative genome analysis of Salmonella enteritidis PT4 and Salmonella gallinarum 287/91 provides insights into evolutionary and host adaptation pathways.</title>
        <authorList>
            <person name="Thomson N.R."/>
            <person name="Clayton D.J."/>
            <person name="Windhorst D."/>
            <person name="Vernikos G."/>
            <person name="Davidson S."/>
            <person name="Churcher C."/>
            <person name="Quail M.A."/>
            <person name="Stevens M."/>
            <person name="Jones M.A."/>
            <person name="Watson M."/>
            <person name="Barron A."/>
            <person name="Layton A."/>
            <person name="Pickard D."/>
            <person name="Kingsley R.A."/>
            <person name="Bignell A."/>
            <person name="Clark L."/>
            <person name="Harris B."/>
            <person name="Ormond D."/>
            <person name="Abdellah Z."/>
            <person name="Brooks K."/>
            <person name="Cherevach I."/>
            <person name="Chillingworth T."/>
            <person name="Woodward J."/>
            <person name="Norberczak H."/>
            <person name="Lord A."/>
            <person name="Arrowsmith C."/>
            <person name="Jagels K."/>
            <person name="Moule S."/>
            <person name="Mungall K."/>
            <person name="Saunders M."/>
            <person name="Whitehead S."/>
            <person name="Chabalgoity J.A."/>
            <person name="Maskell D."/>
            <person name="Humphreys T."/>
            <person name="Roberts M."/>
            <person name="Barrow P.A."/>
            <person name="Dougan G."/>
            <person name="Parkhill J."/>
        </authorList>
    </citation>
    <scope>NUCLEOTIDE SEQUENCE [LARGE SCALE GENOMIC DNA]</scope>
    <source>
        <strain>287/91 / NCTC 13346</strain>
    </source>
</reference>
<organism>
    <name type="scientific">Salmonella gallinarum (strain 287/91 / NCTC 13346)</name>
    <dbReference type="NCBI Taxonomy" id="550538"/>
    <lineage>
        <taxon>Bacteria</taxon>
        <taxon>Pseudomonadati</taxon>
        <taxon>Pseudomonadota</taxon>
        <taxon>Gammaproteobacteria</taxon>
        <taxon>Enterobacterales</taxon>
        <taxon>Enterobacteriaceae</taxon>
        <taxon>Salmonella</taxon>
    </lineage>
</organism>
<feature type="chain" id="PRO_1000129041" description="Peptidase T">
    <location>
        <begin position="1"/>
        <end position="409"/>
    </location>
</feature>
<feature type="active site" evidence="1">
    <location>
        <position position="80"/>
    </location>
</feature>
<feature type="active site" description="Proton acceptor" evidence="1">
    <location>
        <position position="173"/>
    </location>
</feature>
<feature type="binding site" evidence="1">
    <location>
        <position position="78"/>
    </location>
    <ligand>
        <name>Zn(2+)</name>
        <dbReference type="ChEBI" id="CHEBI:29105"/>
        <label>1</label>
    </ligand>
</feature>
<feature type="binding site" evidence="1">
    <location>
        <position position="140"/>
    </location>
    <ligand>
        <name>Zn(2+)</name>
        <dbReference type="ChEBI" id="CHEBI:29105"/>
        <label>1</label>
    </ligand>
</feature>
<feature type="binding site" evidence="1">
    <location>
        <position position="140"/>
    </location>
    <ligand>
        <name>Zn(2+)</name>
        <dbReference type="ChEBI" id="CHEBI:29105"/>
        <label>2</label>
    </ligand>
</feature>
<feature type="binding site" evidence="1">
    <location>
        <position position="174"/>
    </location>
    <ligand>
        <name>Zn(2+)</name>
        <dbReference type="ChEBI" id="CHEBI:29105"/>
        <label>2</label>
    </ligand>
</feature>
<feature type="binding site" evidence="1">
    <location>
        <position position="196"/>
    </location>
    <ligand>
        <name>Zn(2+)</name>
        <dbReference type="ChEBI" id="CHEBI:29105"/>
        <label>1</label>
    </ligand>
</feature>
<feature type="binding site" evidence="1">
    <location>
        <position position="379"/>
    </location>
    <ligand>
        <name>Zn(2+)</name>
        <dbReference type="ChEBI" id="CHEBI:29105"/>
        <label>2</label>
    </ligand>
</feature>
<comment type="function">
    <text evidence="1">Cleaves the N-terminal amino acid of tripeptides.</text>
</comment>
<comment type="catalytic activity">
    <reaction evidence="1">
        <text>Release of the N-terminal residue from a tripeptide.</text>
        <dbReference type="EC" id="3.4.11.4"/>
    </reaction>
</comment>
<comment type="cofactor">
    <cofactor evidence="1">
        <name>Zn(2+)</name>
        <dbReference type="ChEBI" id="CHEBI:29105"/>
    </cofactor>
    <text evidence="1">Binds 2 Zn(2+) ions per subunit.</text>
</comment>
<comment type="subcellular location">
    <subcellularLocation>
        <location evidence="1">Cytoplasm</location>
    </subcellularLocation>
</comment>
<comment type="similarity">
    <text evidence="1">Belongs to the peptidase M20B family.</text>
</comment>
<name>PEPT_SALG2</name>
<accession>B5RB75</accession>